<name>ITR2B_CUCSA</name>
<reference key="1">
    <citation type="journal article" date="1985" name="Biochem. Biophys. Res. Commun.">
        <title>The squash family of serine proteinase inhibitors. Amino acid sequences and association equilibrium constants of inhibitors from squash, summer squash, zucchini, and cucumber seeds.</title>
        <authorList>
            <person name="Wieczorek M."/>
            <person name="Otlewski J."/>
            <person name="Cook J."/>
            <person name="Parks K."/>
            <person name="Leluk J."/>
            <person name="Wilimowska-Pelc A."/>
            <person name="Polanowski A."/>
            <person name="Wilusz T."/>
            <person name="Laskowski M. Jr."/>
        </authorList>
    </citation>
    <scope>PROTEIN SEQUENCE</scope>
    <source>
        <tissue>Seed</tissue>
    </source>
</reference>
<organism>
    <name type="scientific">Cucumis sativus</name>
    <name type="common">Cucumber</name>
    <dbReference type="NCBI Taxonomy" id="3659"/>
    <lineage>
        <taxon>Eukaryota</taxon>
        <taxon>Viridiplantae</taxon>
        <taxon>Streptophyta</taxon>
        <taxon>Embryophyta</taxon>
        <taxon>Tracheophyta</taxon>
        <taxon>Spermatophyta</taxon>
        <taxon>Magnoliopsida</taxon>
        <taxon>eudicotyledons</taxon>
        <taxon>Gunneridae</taxon>
        <taxon>Pentapetalae</taxon>
        <taxon>rosids</taxon>
        <taxon>fabids</taxon>
        <taxon>Cucurbitales</taxon>
        <taxon>Cucurbitaceae</taxon>
        <taxon>Benincaseae</taxon>
        <taxon>Cucumis</taxon>
    </lineage>
</organism>
<protein>
    <recommendedName>
        <fullName>Trypsin inhibitor 2b</fullName>
    </recommendedName>
    <alternativeName>
        <fullName>CSTI-IIB</fullName>
    </alternativeName>
    <alternativeName>
        <fullName>Trypsin inhibitor IIB</fullName>
    </alternativeName>
</protein>
<feature type="peptide" id="PRO_0000044856" description="Trypsin inhibitor 2b">
    <location>
        <begin position="1"/>
        <end position="32"/>
    </location>
</feature>
<feature type="site" description="Reactive bond">
    <location>
        <begin position="5"/>
        <end position="6"/>
    </location>
</feature>
<feature type="disulfide bond" evidence="1">
    <location>
        <begin position="3"/>
        <end position="20"/>
    </location>
</feature>
<feature type="disulfide bond" evidence="1">
    <location>
        <begin position="10"/>
        <end position="22"/>
    </location>
</feature>
<feature type="disulfide bond" evidence="1">
    <location>
        <begin position="16"/>
        <end position="29"/>
    </location>
</feature>
<proteinExistence type="evidence at protein level"/>
<keyword id="KW-0903">Direct protein sequencing</keyword>
<keyword id="KW-1015">Disulfide bond</keyword>
<keyword id="KW-0960">Knottin</keyword>
<keyword id="KW-0646">Protease inhibitor</keyword>
<keyword id="KW-0964">Secreted</keyword>
<keyword id="KW-0722">Serine protease inhibitor</keyword>
<comment type="function">
    <text>Inhibits trypsin.</text>
</comment>
<comment type="subcellular location">
    <subcellularLocation>
        <location>Secreted</location>
    </subcellularLocation>
</comment>
<comment type="domain">
    <text evidence="1">The presence of a 'disulfide through disulfide knot' structurally defines this protein as a knottin.</text>
</comment>
<comment type="similarity">
    <text evidence="2">Belongs to the protease inhibitor I7 (squash-type serine protease inhibitor) family.</text>
</comment>
<accession>P10291</accession>
<sequence>MVCPKILMKCKHDSDCLLDCVCLEDIGYCGVS</sequence>
<evidence type="ECO:0000250" key="1"/>
<evidence type="ECO:0000305" key="2"/>
<dbReference type="SMR" id="P10291"/>
<dbReference type="MEROPS" id="I07.014"/>
<dbReference type="GO" id="GO:0005576">
    <property type="term" value="C:extracellular region"/>
    <property type="evidence" value="ECO:0007669"/>
    <property type="project" value="UniProtKB-SubCell"/>
</dbReference>
<dbReference type="GO" id="GO:0004867">
    <property type="term" value="F:serine-type endopeptidase inhibitor activity"/>
    <property type="evidence" value="ECO:0007669"/>
    <property type="project" value="UniProtKB-KW"/>
</dbReference>
<dbReference type="CDD" id="cd00150">
    <property type="entry name" value="PlantTI"/>
    <property type="match status" value="1"/>
</dbReference>
<dbReference type="Gene3D" id="4.10.75.20">
    <property type="match status" value="1"/>
</dbReference>
<dbReference type="InterPro" id="IPR000737">
    <property type="entry name" value="Prot_inh_squash"/>
</dbReference>
<dbReference type="InterPro" id="IPR011052">
    <property type="entry name" value="Proteinase_amylase_inhib_sf"/>
</dbReference>
<dbReference type="Pfam" id="PF00299">
    <property type="entry name" value="Squash"/>
    <property type="match status" value="1"/>
</dbReference>
<dbReference type="PRINTS" id="PR00293">
    <property type="entry name" value="SQUASHINHBTR"/>
</dbReference>
<dbReference type="SMART" id="SM00286">
    <property type="entry name" value="PTI"/>
    <property type="match status" value="1"/>
</dbReference>
<dbReference type="SUPFAM" id="SSF57027">
    <property type="entry name" value="Plant inhibitors of proteinases and amylases"/>
    <property type="match status" value="1"/>
</dbReference>
<dbReference type="PROSITE" id="PS00286">
    <property type="entry name" value="SQUASH_INHIBITOR"/>
    <property type="match status" value="1"/>
</dbReference>